<accession>C5FSW4</accession>
<organism>
    <name type="scientific">Arthroderma otae (strain ATCC MYA-4605 / CBS 113480)</name>
    <name type="common">Microsporum canis</name>
    <dbReference type="NCBI Taxonomy" id="554155"/>
    <lineage>
        <taxon>Eukaryota</taxon>
        <taxon>Fungi</taxon>
        <taxon>Dikarya</taxon>
        <taxon>Ascomycota</taxon>
        <taxon>Pezizomycotina</taxon>
        <taxon>Eurotiomycetes</taxon>
        <taxon>Eurotiomycetidae</taxon>
        <taxon>Onygenales</taxon>
        <taxon>Arthrodermataceae</taxon>
        <taxon>Microsporum</taxon>
    </lineage>
</organism>
<proteinExistence type="evidence at transcript level"/>
<gene>
    <name type="primary">xkiA</name>
    <name type="ORF">MCYG_05786</name>
</gene>
<comment type="function">
    <text evidence="1">Highly specific D-xylulose kinase which participates in the catabolism of xylose. Xylose is a major component of hemicelluloses such as xylan. Most fungi utilize D-xylose via three enzymatic reactions, xylose reductase (XR), xylitol dehydrogenase (XDH), and xylulokinase, to form xylulose 5-phosphate, which enters pentose phosphate pathway (By similarity).</text>
</comment>
<comment type="catalytic activity">
    <reaction>
        <text>D-xylulose + ATP = D-xylulose 5-phosphate + ADP + H(+)</text>
        <dbReference type="Rhea" id="RHEA:10964"/>
        <dbReference type="ChEBI" id="CHEBI:15378"/>
        <dbReference type="ChEBI" id="CHEBI:17140"/>
        <dbReference type="ChEBI" id="CHEBI:30616"/>
        <dbReference type="ChEBI" id="CHEBI:57737"/>
        <dbReference type="ChEBI" id="CHEBI:456216"/>
        <dbReference type="EC" id="2.7.1.17"/>
    </reaction>
</comment>
<comment type="subcellular location">
    <subcellularLocation>
        <location evidence="1">Cytoplasm</location>
    </subcellularLocation>
</comment>
<comment type="induction">
    <text>By D-xylose, L-arabinose or L-arabitol.</text>
</comment>
<comment type="similarity">
    <text evidence="2">Belongs to the FGGY kinase family.</text>
</comment>
<protein>
    <recommendedName>
        <fullName>Probable D-xylulose kinase A</fullName>
        <shortName>Xylulokinase A</shortName>
        <ecNumber>2.7.1.17</ecNumber>
    </recommendedName>
</protein>
<dbReference type="EC" id="2.7.1.17"/>
<dbReference type="EMBL" id="DS995705">
    <property type="protein sequence ID" value="EEQ32967.1"/>
    <property type="molecule type" value="Genomic_DNA"/>
</dbReference>
<dbReference type="RefSeq" id="XP_002845917.1">
    <property type="nucleotide sequence ID" value="XM_002845871.1"/>
</dbReference>
<dbReference type="SMR" id="C5FSW4"/>
<dbReference type="STRING" id="554155.C5FSW4"/>
<dbReference type="GeneID" id="9224217"/>
<dbReference type="VEuPathDB" id="FungiDB:MCYG_05786"/>
<dbReference type="eggNOG" id="KOG2531">
    <property type="taxonomic scope" value="Eukaryota"/>
</dbReference>
<dbReference type="HOGENOM" id="CLU_016149_5_0_1"/>
<dbReference type="OMA" id="NSCALGG"/>
<dbReference type="OrthoDB" id="1728974at2759"/>
<dbReference type="Proteomes" id="UP000002035">
    <property type="component" value="Unassembled WGS sequence"/>
</dbReference>
<dbReference type="GO" id="GO:0005829">
    <property type="term" value="C:cytosol"/>
    <property type="evidence" value="ECO:0007669"/>
    <property type="project" value="TreeGrafter"/>
</dbReference>
<dbReference type="GO" id="GO:0005524">
    <property type="term" value="F:ATP binding"/>
    <property type="evidence" value="ECO:0007669"/>
    <property type="project" value="UniProtKB-KW"/>
</dbReference>
<dbReference type="GO" id="GO:0004856">
    <property type="term" value="F:D-xylulokinase activity"/>
    <property type="evidence" value="ECO:0007669"/>
    <property type="project" value="UniProtKB-EC"/>
</dbReference>
<dbReference type="GO" id="GO:0042732">
    <property type="term" value="P:D-xylose metabolic process"/>
    <property type="evidence" value="ECO:0007669"/>
    <property type="project" value="UniProtKB-KW"/>
</dbReference>
<dbReference type="GO" id="GO:0005997">
    <property type="term" value="P:xylulose metabolic process"/>
    <property type="evidence" value="ECO:0007669"/>
    <property type="project" value="TreeGrafter"/>
</dbReference>
<dbReference type="CDD" id="cd07776">
    <property type="entry name" value="ASKHA_NBD_FGGY_SpXK-like"/>
    <property type="match status" value="1"/>
</dbReference>
<dbReference type="FunFam" id="3.30.420.40:FF:000118">
    <property type="entry name" value="Xylulose kinase 2"/>
    <property type="match status" value="1"/>
</dbReference>
<dbReference type="Gene3D" id="3.30.420.40">
    <property type="match status" value="2"/>
</dbReference>
<dbReference type="InterPro" id="IPR043129">
    <property type="entry name" value="ATPase_NBD"/>
</dbReference>
<dbReference type="InterPro" id="IPR042024">
    <property type="entry name" value="D-XK_euk"/>
</dbReference>
<dbReference type="InterPro" id="IPR018485">
    <property type="entry name" value="FGGY_C"/>
</dbReference>
<dbReference type="PANTHER" id="PTHR10196">
    <property type="entry name" value="SUGAR KINASE"/>
    <property type="match status" value="1"/>
</dbReference>
<dbReference type="PANTHER" id="PTHR10196:SF57">
    <property type="entry name" value="XYLULOSE KINASE"/>
    <property type="match status" value="1"/>
</dbReference>
<dbReference type="Pfam" id="PF02782">
    <property type="entry name" value="FGGY_C"/>
    <property type="match status" value="1"/>
</dbReference>
<dbReference type="SUPFAM" id="SSF53067">
    <property type="entry name" value="Actin-like ATPase domain"/>
    <property type="match status" value="2"/>
</dbReference>
<keyword id="KW-0067">ATP-binding</keyword>
<keyword id="KW-0119">Carbohydrate metabolism</keyword>
<keyword id="KW-0963">Cytoplasm</keyword>
<keyword id="KW-0418">Kinase</keyword>
<keyword id="KW-0547">Nucleotide-binding</keyword>
<keyword id="KW-1185">Reference proteome</keyword>
<keyword id="KW-0808">Transferase</keyword>
<keyword id="KW-0859">Xylose metabolism</keyword>
<sequence length="570" mass="62891">MGSSGGPLYIGFDLSTQQLKGLVVSSDLKVVHIAKFDFDSDSKGFNISKGVLTNEDEGEVFAPVAMWLQALDAVLQDLKHQGLDFSLVRGISGAGQQHGSVYWNESAEEILGGLDGGKTLEDQLQQALSYPYSPNWQDSSTQRECDEFDAFLGSEEELARVTGSKAHHILRFQRKHPDAYRKTSRISLVSSFLASIFLGSVAPFDISDVCGMNLWDMPMNRWNERLLKLCAGEAGPEELKKKLGDVPHDGGQELGKISSYFAKRYSFHPDCAITPSTGDNPATILALPLRPLDAMVSLGTSTTFLMSTPQYKPDPSTHFFNHPTTPGLYMFMLCYKNGGLAREQVRDAINATSGEKTDPSNPWSNFDRVLLETPPGGQKAGSGPMKMGLFFPRPEIVPNLGEGEWHFNYTPGQANEELKETDEGWTHPRDDARAIVESQFLSLRLRSKELVHSPSGGVPPQPRRIYLVGGGSRNAAIAKVAGEVLGGIEGVYKLDVGENACALGAAYKAVWALERAPDQTFEDLIGRRWREDEFVEKIADGFQPDIFEKYRQAVQGFEKMEKQVLMEAKQ</sequence>
<feature type="chain" id="PRO_0000393525" description="Probable D-xylulose kinase A">
    <location>
        <begin position="1"/>
        <end position="570"/>
    </location>
</feature>
<feature type="binding site" evidence="1">
    <location>
        <position position="98"/>
    </location>
    <ligand>
        <name>substrate</name>
    </ligand>
</feature>
<feature type="binding site" evidence="1">
    <location>
        <position position="279"/>
    </location>
    <ligand>
        <name>substrate</name>
    </ligand>
</feature>
<feature type="binding site" evidence="1">
    <location>
        <position position="280"/>
    </location>
    <ligand>
        <name>substrate</name>
    </ligand>
</feature>
<feature type="binding site" evidence="1">
    <location>
        <position position="363"/>
    </location>
    <ligand>
        <name>ATP</name>
        <dbReference type="ChEBI" id="CHEBI:30616"/>
    </ligand>
</feature>
<feature type="binding site" evidence="1">
    <location>
        <begin position="470"/>
        <end position="471"/>
    </location>
    <ligand>
        <name>ATP</name>
        <dbReference type="ChEBI" id="CHEBI:30616"/>
    </ligand>
</feature>
<feature type="binding site" evidence="1">
    <location>
        <position position="474"/>
    </location>
    <ligand>
        <name>ATP</name>
        <dbReference type="ChEBI" id="CHEBI:30616"/>
    </ligand>
</feature>
<name>XKS1_ARTOC</name>
<reference key="1">
    <citation type="journal article" date="2012" name="MBio">
        <title>Comparative genome analysis of Trichophyton rubrum and related dermatophytes reveals candidate genes involved in infection.</title>
        <authorList>
            <person name="Martinez D.A."/>
            <person name="Oliver B.G."/>
            <person name="Graeser Y."/>
            <person name="Goldberg J.M."/>
            <person name="Li W."/>
            <person name="Martinez-Rossi N.M."/>
            <person name="Monod M."/>
            <person name="Shelest E."/>
            <person name="Barton R.C."/>
            <person name="Birch E."/>
            <person name="Brakhage A.A."/>
            <person name="Chen Z."/>
            <person name="Gurr S.J."/>
            <person name="Heiman D."/>
            <person name="Heitman J."/>
            <person name="Kosti I."/>
            <person name="Rossi A."/>
            <person name="Saif S."/>
            <person name="Samalova M."/>
            <person name="Saunders C.W."/>
            <person name="Shea T."/>
            <person name="Summerbell R.C."/>
            <person name="Xu J."/>
            <person name="Young S."/>
            <person name="Zeng Q."/>
            <person name="Birren B.W."/>
            <person name="Cuomo C.A."/>
            <person name="White T.C."/>
        </authorList>
    </citation>
    <scope>NUCLEOTIDE SEQUENCE [LARGE SCALE GENOMIC DNA]</scope>
    <source>
        <strain>ATCC MYA-4605 / CBS 113480</strain>
    </source>
</reference>
<evidence type="ECO:0000250" key="1"/>
<evidence type="ECO:0000305" key="2"/>